<protein>
    <recommendedName>
        <fullName evidence="1">Arginine repressor</fullName>
    </recommendedName>
</protein>
<evidence type="ECO:0000255" key="1">
    <source>
        <dbReference type="HAMAP-Rule" id="MF_00173"/>
    </source>
</evidence>
<keyword id="KW-0028">Amino-acid biosynthesis</keyword>
<keyword id="KW-0055">Arginine biosynthesis</keyword>
<keyword id="KW-0963">Cytoplasm</keyword>
<keyword id="KW-0238">DNA-binding</keyword>
<keyword id="KW-1185">Reference proteome</keyword>
<keyword id="KW-0678">Repressor</keyword>
<keyword id="KW-0804">Transcription</keyword>
<keyword id="KW-0805">Transcription regulation</keyword>
<comment type="function">
    <text evidence="1">Regulates arginine biosynthesis genes.</text>
</comment>
<comment type="pathway">
    <text>Amino-acid biosynthesis; L-arginine biosynthesis [regulation].</text>
</comment>
<comment type="subcellular location">
    <subcellularLocation>
        <location evidence="1">Cytoplasm</location>
    </subcellularLocation>
</comment>
<comment type="similarity">
    <text evidence="1">Belongs to the ArgR family.</text>
</comment>
<sequence length="151" mass="16422">MKARRQRKILELIKAGLVKTQEDMVNALKECGFNVTQATVSRDIKELGLIKIPGGNNAFRYALPGDRPFIRGEERLRRVFRDSVIGLDSSENLIIVKTHPGGAQGVASAIDQAGWREIIGTVGGDDTILVVVKPKRAAGAVLKRFEELSGG</sequence>
<dbReference type="EMBL" id="AP009389">
    <property type="protein sequence ID" value="BAF59381.1"/>
    <property type="molecule type" value="Genomic_DNA"/>
</dbReference>
<dbReference type="SMR" id="A5D300"/>
<dbReference type="STRING" id="370438.PTH_1200"/>
<dbReference type="KEGG" id="pth:PTH_1200"/>
<dbReference type="eggNOG" id="COG1438">
    <property type="taxonomic scope" value="Bacteria"/>
</dbReference>
<dbReference type="HOGENOM" id="CLU_097103_3_0_9"/>
<dbReference type="UniPathway" id="UPA00068"/>
<dbReference type="Proteomes" id="UP000006556">
    <property type="component" value="Chromosome"/>
</dbReference>
<dbReference type="GO" id="GO:0005737">
    <property type="term" value="C:cytoplasm"/>
    <property type="evidence" value="ECO:0007669"/>
    <property type="project" value="UniProtKB-SubCell"/>
</dbReference>
<dbReference type="GO" id="GO:0034618">
    <property type="term" value="F:arginine binding"/>
    <property type="evidence" value="ECO:0007669"/>
    <property type="project" value="InterPro"/>
</dbReference>
<dbReference type="GO" id="GO:0003677">
    <property type="term" value="F:DNA binding"/>
    <property type="evidence" value="ECO:0007669"/>
    <property type="project" value="UniProtKB-KW"/>
</dbReference>
<dbReference type="GO" id="GO:0003700">
    <property type="term" value="F:DNA-binding transcription factor activity"/>
    <property type="evidence" value="ECO:0007669"/>
    <property type="project" value="UniProtKB-UniRule"/>
</dbReference>
<dbReference type="GO" id="GO:0006526">
    <property type="term" value="P:L-arginine biosynthetic process"/>
    <property type="evidence" value="ECO:0007669"/>
    <property type="project" value="UniProtKB-UniPathway"/>
</dbReference>
<dbReference type="GO" id="GO:0051259">
    <property type="term" value="P:protein complex oligomerization"/>
    <property type="evidence" value="ECO:0007669"/>
    <property type="project" value="InterPro"/>
</dbReference>
<dbReference type="GO" id="GO:1900079">
    <property type="term" value="P:regulation of arginine biosynthetic process"/>
    <property type="evidence" value="ECO:0007669"/>
    <property type="project" value="UniProtKB-UniRule"/>
</dbReference>
<dbReference type="Gene3D" id="3.30.1360.40">
    <property type="match status" value="1"/>
</dbReference>
<dbReference type="Gene3D" id="1.10.10.10">
    <property type="entry name" value="Winged helix-like DNA-binding domain superfamily/Winged helix DNA-binding domain"/>
    <property type="match status" value="1"/>
</dbReference>
<dbReference type="HAMAP" id="MF_00173">
    <property type="entry name" value="Arg_repressor"/>
    <property type="match status" value="1"/>
</dbReference>
<dbReference type="InterPro" id="IPR001669">
    <property type="entry name" value="Arg_repress"/>
</dbReference>
<dbReference type="InterPro" id="IPR020899">
    <property type="entry name" value="Arg_repress_C"/>
</dbReference>
<dbReference type="InterPro" id="IPR036251">
    <property type="entry name" value="Arg_repress_C_sf"/>
</dbReference>
<dbReference type="InterPro" id="IPR020900">
    <property type="entry name" value="Arg_repress_DNA-bd"/>
</dbReference>
<dbReference type="InterPro" id="IPR036388">
    <property type="entry name" value="WH-like_DNA-bd_sf"/>
</dbReference>
<dbReference type="InterPro" id="IPR036390">
    <property type="entry name" value="WH_DNA-bd_sf"/>
</dbReference>
<dbReference type="NCBIfam" id="TIGR01529">
    <property type="entry name" value="argR_whole"/>
    <property type="match status" value="1"/>
</dbReference>
<dbReference type="PANTHER" id="PTHR34471">
    <property type="entry name" value="ARGININE REPRESSOR"/>
    <property type="match status" value="1"/>
</dbReference>
<dbReference type="PANTHER" id="PTHR34471:SF1">
    <property type="entry name" value="ARGININE REPRESSOR"/>
    <property type="match status" value="1"/>
</dbReference>
<dbReference type="Pfam" id="PF01316">
    <property type="entry name" value="Arg_repressor"/>
    <property type="match status" value="1"/>
</dbReference>
<dbReference type="Pfam" id="PF02863">
    <property type="entry name" value="Arg_repressor_C"/>
    <property type="match status" value="1"/>
</dbReference>
<dbReference type="PRINTS" id="PR01467">
    <property type="entry name" value="ARGREPRESSOR"/>
</dbReference>
<dbReference type="SUPFAM" id="SSF55252">
    <property type="entry name" value="C-terminal domain of arginine repressor"/>
    <property type="match status" value="1"/>
</dbReference>
<dbReference type="SUPFAM" id="SSF46785">
    <property type="entry name" value="Winged helix' DNA-binding domain"/>
    <property type="match status" value="1"/>
</dbReference>
<organism>
    <name type="scientific">Pelotomaculum thermopropionicum (strain DSM 13744 / JCM 10971 / SI)</name>
    <dbReference type="NCBI Taxonomy" id="370438"/>
    <lineage>
        <taxon>Bacteria</taxon>
        <taxon>Bacillati</taxon>
        <taxon>Bacillota</taxon>
        <taxon>Clostridia</taxon>
        <taxon>Eubacteriales</taxon>
        <taxon>Desulfotomaculaceae</taxon>
        <taxon>Pelotomaculum</taxon>
    </lineage>
</organism>
<feature type="chain" id="PRO_1000077128" description="Arginine repressor">
    <location>
        <begin position="1"/>
        <end position="151"/>
    </location>
</feature>
<reference key="1">
    <citation type="journal article" date="2008" name="Genome Res.">
        <title>The genome of Pelotomaculum thermopropionicum reveals niche-associated evolution in anaerobic microbiota.</title>
        <authorList>
            <person name="Kosaka T."/>
            <person name="Kato S."/>
            <person name="Shimoyama T."/>
            <person name="Ishii S."/>
            <person name="Abe T."/>
            <person name="Watanabe K."/>
        </authorList>
    </citation>
    <scope>NUCLEOTIDE SEQUENCE [LARGE SCALE GENOMIC DNA]</scope>
    <source>
        <strain>DSM 13744 / JCM 10971 / SI</strain>
    </source>
</reference>
<name>ARGR_PELTS</name>
<proteinExistence type="inferred from homology"/>
<accession>A5D300</accession>
<gene>
    <name evidence="1" type="primary">argR</name>
    <name type="ordered locus">PTH_1200</name>
</gene>